<organism>
    <name type="scientific">Prochlorococcus marinus (strain AS9601)</name>
    <dbReference type="NCBI Taxonomy" id="146891"/>
    <lineage>
        <taxon>Bacteria</taxon>
        <taxon>Bacillati</taxon>
        <taxon>Cyanobacteriota</taxon>
        <taxon>Cyanophyceae</taxon>
        <taxon>Synechococcales</taxon>
        <taxon>Prochlorococcaceae</taxon>
        <taxon>Prochlorococcus</taxon>
    </lineage>
</organism>
<name>SYDND_PROMS</name>
<keyword id="KW-0030">Aminoacyl-tRNA synthetase</keyword>
<keyword id="KW-0067">ATP-binding</keyword>
<keyword id="KW-0963">Cytoplasm</keyword>
<keyword id="KW-0436">Ligase</keyword>
<keyword id="KW-0547">Nucleotide-binding</keyword>
<keyword id="KW-0648">Protein biosynthesis</keyword>
<protein>
    <recommendedName>
        <fullName evidence="1">Aspartate--tRNA(Asp/Asn) ligase</fullName>
        <ecNumber evidence="1">6.1.1.23</ecNumber>
    </recommendedName>
    <alternativeName>
        <fullName evidence="1">Aspartyl-tRNA synthetase</fullName>
        <shortName evidence="1">AspRS</shortName>
    </alternativeName>
    <alternativeName>
        <fullName evidence="1">Non-discriminating aspartyl-tRNA synthetase</fullName>
        <shortName evidence="1">ND-AspRS</shortName>
    </alternativeName>
</protein>
<evidence type="ECO:0000255" key="1">
    <source>
        <dbReference type="HAMAP-Rule" id="MF_00044"/>
    </source>
</evidence>
<dbReference type="EC" id="6.1.1.23" evidence="1"/>
<dbReference type="EMBL" id="CP000551">
    <property type="protein sequence ID" value="ABM71181.1"/>
    <property type="molecule type" value="Genomic_DNA"/>
</dbReference>
<dbReference type="RefSeq" id="WP_011819299.1">
    <property type="nucleotide sequence ID" value="NC_008816.1"/>
</dbReference>
<dbReference type="SMR" id="A2BTS0"/>
<dbReference type="STRING" id="146891.A9601_18981"/>
<dbReference type="KEGG" id="pmb:A9601_18981"/>
<dbReference type="eggNOG" id="COG0173">
    <property type="taxonomic scope" value="Bacteria"/>
</dbReference>
<dbReference type="HOGENOM" id="CLU_014330_3_2_3"/>
<dbReference type="OrthoDB" id="9802326at2"/>
<dbReference type="Proteomes" id="UP000002590">
    <property type="component" value="Chromosome"/>
</dbReference>
<dbReference type="GO" id="GO:0005737">
    <property type="term" value="C:cytoplasm"/>
    <property type="evidence" value="ECO:0007669"/>
    <property type="project" value="UniProtKB-SubCell"/>
</dbReference>
<dbReference type="GO" id="GO:0004815">
    <property type="term" value="F:aspartate-tRNA ligase activity"/>
    <property type="evidence" value="ECO:0007669"/>
    <property type="project" value="UniProtKB-UniRule"/>
</dbReference>
<dbReference type="GO" id="GO:0050560">
    <property type="term" value="F:aspartate-tRNA(Asn) ligase activity"/>
    <property type="evidence" value="ECO:0007669"/>
    <property type="project" value="UniProtKB-EC"/>
</dbReference>
<dbReference type="GO" id="GO:0005524">
    <property type="term" value="F:ATP binding"/>
    <property type="evidence" value="ECO:0007669"/>
    <property type="project" value="UniProtKB-UniRule"/>
</dbReference>
<dbReference type="GO" id="GO:0003676">
    <property type="term" value="F:nucleic acid binding"/>
    <property type="evidence" value="ECO:0007669"/>
    <property type="project" value="InterPro"/>
</dbReference>
<dbReference type="GO" id="GO:0006422">
    <property type="term" value="P:aspartyl-tRNA aminoacylation"/>
    <property type="evidence" value="ECO:0007669"/>
    <property type="project" value="UniProtKB-UniRule"/>
</dbReference>
<dbReference type="CDD" id="cd00777">
    <property type="entry name" value="AspRS_core"/>
    <property type="match status" value="1"/>
</dbReference>
<dbReference type="CDD" id="cd04317">
    <property type="entry name" value="EcAspRS_like_N"/>
    <property type="match status" value="1"/>
</dbReference>
<dbReference type="Gene3D" id="3.30.930.10">
    <property type="entry name" value="Bira Bifunctional Protein, Domain 2"/>
    <property type="match status" value="1"/>
</dbReference>
<dbReference type="Gene3D" id="3.30.1360.30">
    <property type="entry name" value="GAD-like domain"/>
    <property type="match status" value="1"/>
</dbReference>
<dbReference type="Gene3D" id="2.40.50.140">
    <property type="entry name" value="Nucleic acid-binding proteins"/>
    <property type="match status" value="1"/>
</dbReference>
<dbReference type="HAMAP" id="MF_00044">
    <property type="entry name" value="Asp_tRNA_synth_type1"/>
    <property type="match status" value="1"/>
</dbReference>
<dbReference type="InterPro" id="IPR004364">
    <property type="entry name" value="Aa-tRNA-synt_II"/>
</dbReference>
<dbReference type="InterPro" id="IPR006195">
    <property type="entry name" value="aa-tRNA-synth_II"/>
</dbReference>
<dbReference type="InterPro" id="IPR045864">
    <property type="entry name" value="aa-tRNA-synth_II/BPL/LPL"/>
</dbReference>
<dbReference type="InterPro" id="IPR004524">
    <property type="entry name" value="Asp-tRNA-ligase_1"/>
</dbReference>
<dbReference type="InterPro" id="IPR047089">
    <property type="entry name" value="Asp-tRNA-ligase_1_N"/>
</dbReference>
<dbReference type="InterPro" id="IPR002312">
    <property type="entry name" value="Asp/Asn-tRNA-synth_IIb"/>
</dbReference>
<dbReference type="InterPro" id="IPR047090">
    <property type="entry name" value="AspRS_core"/>
</dbReference>
<dbReference type="InterPro" id="IPR004115">
    <property type="entry name" value="GAD-like_sf"/>
</dbReference>
<dbReference type="InterPro" id="IPR029351">
    <property type="entry name" value="GAD_dom"/>
</dbReference>
<dbReference type="InterPro" id="IPR012340">
    <property type="entry name" value="NA-bd_OB-fold"/>
</dbReference>
<dbReference type="InterPro" id="IPR004365">
    <property type="entry name" value="NA-bd_OB_tRNA"/>
</dbReference>
<dbReference type="NCBIfam" id="TIGR00459">
    <property type="entry name" value="aspS_bact"/>
    <property type="match status" value="1"/>
</dbReference>
<dbReference type="NCBIfam" id="NF001750">
    <property type="entry name" value="PRK00476.1"/>
    <property type="match status" value="1"/>
</dbReference>
<dbReference type="PANTHER" id="PTHR22594:SF5">
    <property type="entry name" value="ASPARTATE--TRNA LIGASE, MITOCHONDRIAL"/>
    <property type="match status" value="1"/>
</dbReference>
<dbReference type="PANTHER" id="PTHR22594">
    <property type="entry name" value="ASPARTYL/LYSYL-TRNA SYNTHETASE"/>
    <property type="match status" value="1"/>
</dbReference>
<dbReference type="Pfam" id="PF02938">
    <property type="entry name" value="GAD"/>
    <property type="match status" value="1"/>
</dbReference>
<dbReference type="Pfam" id="PF00152">
    <property type="entry name" value="tRNA-synt_2"/>
    <property type="match status" value="1"/>
</dbReference>
<dbReference type="Pfam" id="PF01336">
    <property type="entry name" value="tRNA_anti-codon"/>
    <property type="match status" value="1"/>
</dbReference>
<dbReference type="PRINTS" id="PR01042">
    <property type="entry name" value="TRNASYNTHASP"/>
</dbReference>
<dbReference type="SUPFAM" id="SSF55681">
    <property type="entry name" value="Class II aaRS and biotin synthetases"/>
    <property type="match status" value="1"/>
</dbReference>
<dbReference type="SUPFAM" id="SSF55261">
    <property type="entry name" value="GAD domain-like"/>
    <property type="match status" value="1"/>
</dbReference>
<dbReference type="SUPFAM" id="SSF50249">
    <property type="entry name" value="Nucleic acid-binding proteins"/>
    <property type="match status" value="1"/>
</dbReference>
<dbReference type="PROSITE" id="PS50862">
    <property type="entry name" value="AA_TRNA_LIGASE_II"/>
    <property type="match status" value="1"/>
</dbReference>
<sequence>MRNKICEELNNTDIGKLVNLCGWVDRRRDHGGVIFIDLRDHSGFLQITINPDDGADLFKQAETLRNETVIMVSGIINERPKDSINTNLSTGELELKVKDLQILNQIKNNLPFPVSIHDYENTKEELRLKYRYLDLRRGKLLENLKKRHKIIKVAREFLDNFGFTEVETPLLTKSTPEGARDFLVPARLSNGEFFALPQSPQLFKQLLMVGGLDKYYQIAKCFRDEDLRADRQPEFTQLDIEMSFISEEEIISFNESLIKKIWKEVLNINFNNAFPRMTWQAAMDNYGTDRPDTRYQMLLKDLGGVLGNIGFNIFTKAIKSGGYIKSITVKGGNSSISNVRIKPGGDIFKVAQDAGAGGLAFIRVKGDELETIGAIKNNLSEEHIADILKITEAKDGDLILLGAGDKQIVNQSLDRVRQYIAKELNLIDKSKWNFLWVTDFPMFERNEDENRYEALHHPFCSPKNIKSKDSENLKKEIESSTANAYDLVLNGLELGGGSLRIHEANLQRQVLKTVGLTDKEIDEKFGFLIEALEMGAPPHGGIAFGLDRITMLIIGADSIRETIAFPKNQQAKCLLTNAPSNVSESQLKELDIEITIDE</sequence>
<feature type="chain" id="PRO_1000006726" description="Aspartate--tRNA(Asp/Asn) ligase">
    <location>
        <begin position="1"/>
        <end position="598"/>
    </location>
</feature>
<feature type="region of interest" description="Aspartate" evidence="1">
    <location>
        <begin position="201"/>
        <end position="204"/>
    </location>
</feature>
<feature type="binding site" evidence="1">
    <location>
        <position position="177"/>
    </location>
    <ligand>
        <name>L-aspartate</name>
        <dbReference type="ChEBI" id="CHEBI:29991"/>
    </ligand>
</feature>
<feature type="binding site" evidence="1">
    <location>
        <begin position="223"/>
        <end position="225"/>
    </location>
    <ligand>
        <name>ATP</name>
        <dbReference type="ChEBI" id="CHEBI:30616"/>
    </ligand>
</feature>
<feature type="binding site" evidence="1">
    <location>
        <position position="223"/>
    </location>
    <ligand>
        <name>L-aspartate</name>
        <dbReference type="ChEBI" id="CHEBI:29991"/>
    </ligand>
</feature>
<feature type="binding site" evidence="1">
    <location>
        <position position="232"/>
    </location>
    <ligand>
        <name>ATP</name>
        <dbReference type="ChEBI" id="CHEBI:30616"/>
    </ligand>
</feature>
<feature type="binding site" evidence="1">
    <location>
        <position position="456"/>
    </location>
    <ligand>
        <name>L-aspartate</name>
        <dbReference type="ChEBI" id="CHEBI:29991"/>
    </ligand>
</feature>
<feature type="binding site" evidence="1">
    <location>
        <position position="493"/>
    </location>
    <ligand>
        <name>ATP</name>
        <dbReference type="ChEBI" id="CHEBI:30616"/>
    </ligand>
</feature>
<feature type="binding site" evidence="1">
    <location>
        <position position="500"/>
    </location>
    <ligand>
        <name>L-aspartate</name>
        <dbReference type="ChEBI" id="CHEBI:29991"/>
    </ligand>
</feature>
<feature type="binding site" evidence="1">
    <location>
        <begin position="545"/>
        <end position="548"/>
    </location>
    <ligand>
        <name>ATP</name>
        <dbReference type="ChEBI" id="CHEBI:30616"/>
    </ligand>
</feature>
<feature type="site" description="Important for tRNA non-discrimination" evidence="1">
    <location>
        <position position="30"/>
    </location>
</feature>
<gene>
    <name evidence="1" type="primary">aspS</name>
    <name type="ordered locus">A9601_18981</name>
</gene>
<accession>A2BTS0</accession>
<proteinExistence type="inferred from homology"/>
<comment type="function">
    <text evidence="1">Aspartyl-tRNA synthetase with relaxed tRNA specificity since it is able to aspartylate not only its cognate tRNA(Asp) but also tRNA(Asn). Reaction proceeds in two steps: L-aspartate is first activated by ATP to form Asp-AMP and then transferred to the acceptor end of tRNA(Asp/Asn).</text>
</comment>
<comment type="catalytic activity">
    <reaction evidence="1">
        <text>tRNA(Asx) + L-aspartate + ATP = L-aspartyl-tRNA(Asx) + AMP + diphosphate</text>
        <dbReference type="Rhea" id="RHEA:18349"/>
        <dbReference type="Rhea" id="RHEA-COMP:9710"/>
        <dbReference type="Rhea" id="RHEA-COMP:9711"/>
        <dbReference type="ChEBI" id="CHEBI:29991"/>
        <dbReference type="ChEBI" id="CHEBI:30616"/>
        <dbReference type="ChEBI" id="CHEBI:33019"/>
        <dbReference type="ChEBI" id="CHEBI:78442"/>
        <dbReference type="ChEBI" id="CHEBI:78516"/>
        <dbReference type="ChEBI" id="CHEBI:456215"/>
        <dbReference type="EC" id="6.1.1.23"/>
    </reaction>
</comment>
<comment type="subunit">
    <text evidence="1">Homodimer.</text>
</comment>
<comment type="subcellular location">
    <subcellularLocation>
        <location evidence="1">Cytoplasm</location>
    </subcellularLocation>
</comment>
<comment type="similarity">
    <text evidence="1">Belongs to the class-II aminoacyl-tRNA synthetase family. Type 1 subfamily.</text>
</comment>
<reference key="1">
    <citation type="journal article" date="2007" name="PLoS Genet.">
        <title>Patterns and implications of gene gain and loss in the evolution of Prochlorococcus.</title>
        <authorList>
            <person name="Kettler G.C."/>
            <person name="Martiny A.C."/>
            <person name="Huang K."/>
            <person name="Zucker J."/>
            <person name="Coleman M.L."/>
            <person name="Rodrigue S."/>
            <person name="Chen F."/>
            <person name="Lapidus A."/>
            <person name="Ferriera S."/>
            <person name="Johnson J."/>
            <person name="Steglich C."/>
            <person name="Church G.M."/>
            <person name="Richardson P."/>
            <person name="Chisholm S.W."/>
        </authorList>
    </citation>
    <scope>NUCLEOTIDE SEQUENCE [LARGE SCALE GENOMIC DNA]</scope>
    <source>
        <strain>AS9601</strain>
    </source>
</reference>